<dbReference type="EC" id="3.5.4.16" evidence="1"/>
<dbReference type="EMBL" id="CP000688">
    <property type="protein sequence ID" value="ABQ17594.1"/>
    <property type="molecule type" value="Genomic_DNA"/>
</dbReference>
<dbReference type="SMR" id="A5FQD3"/>
<dbReference type="KEGG" id="deb:DehaBAV1_1014"/>
<dbReference type="PATRIC" id="fig|216389.18.peg.1069"/>
<dbReference type="HOGENOM" id="CLU_049768_3_3_0"/>
<dbReference type="UniPathway" id="UPA00848">
    <property type="reaction ID" value="UER00151"/>
</dbReference>
<dbReference type="GO" id="GO:0005737">
    <property type="term" value="C:cytoplasm"/>
    <property type="evidence" value="ECO:0007669"/>
    <property type="project" value="TreeGrafter"/>
</dbReference>
<dbReference type="GO" id="GO:0005525">
    <property type="term" value="F:GTP binding"/>
    <property type="evidence" value="ECO:0007669"/>
    <property type="project" value="UniProtKB-KW"/>
</dbReference>
<dbReference type="GO" id="GO:0003934">
    <property type="term" value="F:GTP cyclohydrolase I activity"/>
    <property type="evidence" value="ECO:0007669"/>
    <property type="project" value="UniProtKB-UniRule"/>
</dbReference>
<dbReference type="GO" id="GO:0008270">
    <property type="term" value="F:zinc ion binding"/>
    <property type="evidence" value="ECO:0007669"/>
    <property type="project" value="UniProtKB-UniRule"/>
</dbReference>
<dbReference type="GO" id="GO:0006730">
    <property type="term" value="P:one-carbon metabolic process"/>
    <property type="evidence" value="ECO:0007669"/>
    <property type="project" value="UniProtKB-UniRule"/>
</dbReference>
<dbReference type="GO" id="GO:0006729">
    <property type="term" value="P:tetrahydrobiopterin biosynthetic process"/>
    <property type="evidence" value="ECO:0007669"/>
    <property type="project" value="TreeGrafter"/>
</dbReference>
<dbReference type="GO" id="GO:0046654">
    <property type="term" value="P:tetrahydrofolate biosynthetic process"/>
    <property type="evidence" value="ECO:0007669"/>
    <property type="project" value="UniProtKB-UniRule"/>
</dbReference>
<dbReference type="FunFam" id="1.10.286.10:FF:000001">
    <property type="entry name" value="GTP cyclohydrolase 1"/>
    <property type="match status" value="1"/>
</dbReference>
<dbReference type="FunFam" id="3.30.1130.10:FF:000001">
    <property type="entry name" value="GTP cyclohydrolase 1"/>
    <property type="match status" value="1"/>
</dbReference>
<dbReference type="Gene3D" id="1.10.286.10">
    <property type="match status" value="1"/>
</dbReference>
<dbReference type="Gene3D" id="3.30.1130.10">
    <property type="match status" value="1"/>
</dbReference>
<dbReference type="HAMAP" id="MF_00223">
    <property type="entry name" value="FolE"/>
    <property type="match status" value="1"/>
</dbReference>
<dbReference type="InterPro" id="IPR043133">
    <property type="entry name" value="GTP-CH-I_C/QueF"/>
</dbReference>
<dbReference type="InterPro" id="IPR043134">
    <property type="entry name" value="GTP-CH-I_N"/>
</dbReference>
<dbReference type="InterPro" id="IPR001474">
    <property type="entry name" value="GTP_CycHdrlase_I"/>
</dbReference>
<dbReference type="InterPro" id="IPR018234">
    <property type="entry name" value="GTP_CycHdrlase_I_CS"/>
</dbReference>
<dbReference type="InterPro" id="IPR020602">
    <property type="entry name" value="GTP_CycHdrlase_I_dom"/>
</dbReference>
<dbReference type="NCBIfam" id="TIGR00063">
    <property type="entry name" value="folE"/>
    <property type="match status" value="1"/>
</dbReference>
<dbReference type="NCBIfam" id="NF006825">
    <property type="entry name" value="PRK09347.1-2"/>
    <property type="match status" value="1"/>
</dbReference>
<dbReference type="NCBIfam" id="NF006826">
    <property type="entry name" value="PRK09347.1-3"/>
    <property type="match status" value="1"/>
</dbReference>
<dbReference type="PANTHER" id="PTHR11109:SF7">
    <property type="entry name" value="GTP CYCLOHYDROLASE 1"/>
    <property type="match status" value="1"/>
</dbReference>
<dbReference type="PANTHER" id="PTHR11109">
    <property type="entry name" value="GTP CYCLOHYDROLASE I"/>
    <property type="match status" value="1"/>
</dbReference>
<dbReference type="Pfam" id="PF01227">
    <property type="entry name" value="GTP_cyclohydroI"/>
    <property type="match status" value="1"/>
</dbReference>
<dbReference type="SUPFAM" id="SSF55620">
    <property type="entry name" value="Tetrahydrobiopterin biosynthesis enzymes-like"/>
    <property type="match status" value="1"/>
</dbReference>
<dbReference type="PROSITE" id="PS00859">
    <property type="entry name" value="GTP_CYCLOHYDROL_1_1"/>
    <property type="match status" value="1"/>
</dbReference>
<sequence>MFDEQAIKQSVQNILVAIGEDPDREGLKETPRRVAQMYTELFSGMNQDPAEVLRVGYELGHREMVIIKDIPFYSMCEHHLLPFSGVVHIGYIPNIDGRVVGISKLARVVEIYAKRPQIQERMATQIADAIMDGLKCDGVAVVIEAEHMCMVMRGIKKPGSRVITSALRGSFHKSPAARAEFLSLIQHKG</sequence>
<reference key="1">
    <citation type="submission" date="2007-05" db="EMBL/GenBank/DDBJ databases">
        <title>Complete sequence of Dehalococcoides sp. BAV1.</title>
        <authorList>
            <consortium name="US DOE Joint Genome Institute"/>
            <person name="Copeland A."/>
            <person name="Lucas S."/>
            <person name="Lapidus A."/>
            <person name="Barry K."/>
            <person name="Detter J.C."/>
            <person name="Glavina del Rio T."/>
            <person name="Hammon N."/>
            <person name="Israni S."/>
            <person name="Pitluck S."/>
            <person name="Lowry S."/>
            <person name="Clum A."/>
            <person name="Schmutz J."/>
            <person name="Larimer F."/>
            <person name="Land M."/>
            <person name="Hauser L."/>
            <person name="Kyrpides N."/>
            <person name="Kim E."/>
            <person name="Ritalahti K.M."/>
            <person name="Loeffler F."/>
            <person name="Richardson P."/>
        </authorList>
    </citation>
    <scope>NUCLEOTIDE SEQUENCE [LARGE SCALE GENOMIC DNA]</scope>
    <source>
        <strain>ATCC BAA-2100 / JCM 16839 / KCTC 5957 / BAV1</strain>
    </source>
</reference>
<gene>
    <name evidence="1" type="primary">folE</name>
    <name type="ordered locus">DehaBAV1_1014</name>
</gene>
<organism>
    <name type="scientific">Dehalococcoides mccartyi (strain ATCC BAA-2100 / JCM 16839 / KCTC 5957 / BAV1)</name>
    <dbReference type="NCBI Taxonomy" id="216389"/>
    <lineage>
        <taxon>Bacteria</taxon>
        <taxon>Bacillati</taxon>
        <taxon>Chloroflexota</taxon>
        <taxon>Dehalococcoidia</taxon>
        <taxon>Dehalococcoidales</taxon>
        <taxon>Dehalococcoidaceae</taxon>
        <taxon>Dehalococcoides</taxon>
    </lineage>
</organism>
<feature type="chain" id="PRO_1000078140" description="GTP cyclohydrolase 1">
    <location>
        <begin position="1"/>
        <end position="189"/>
    </location>
</feature>
<feature type="binding site" evidence="1">
    <location>
        <position position="76"/>
    </location>
    <ligand>
        <name>Zn(2+)</name>
        <dbReference type="ChEBI" id="CHEBI:29105"/>
    </ligand>
</feature>
<feature type="binding site" evidence="1">
    <location>
        <position position="79"/>
    </location>
    <ligand>
        <name>Zn(2+)</name>
        <dbReference type="ChEBI" id="CHEBI:29105"/>
    </ligand>
</feature>
<feature type="binding site" evidence="1">
    <location>
        <position position="149"/>
    </location>
    <ligand>
        <name>Zn(2+)</name>
        <dbReference type="ChEBI" id="CHEBI:29105"/>
    </ligand>
</feature>
<proteinExistence type="inferred from homology"/>
<evidence type="ECO:0000255" key="1">
    <source>
        <dbReference type="HAMAP-Rule" id="MF_00223"/>
    </source>
</evidence>
<keyword id="KW-0342">GTP-binding</keyword>
<keyword id="KW-0378">Hydrolase</keyword>
<keyword id="KW-0479">Metal-binding</keyword>
<keyword id="KW-0547">Nucleotide-binding</keyword>
<keyword id="KW-0554">One-carbon metabolism</keyword>
<keyword id="KW-0862">Zinc</keyword>
<protein>
    <recommendedName>
        <fullName evidence="1">GTP cyclohydrolase 1</fullName>
        <ecNumber evidence="1">3.5.4.16</ecNumber>
    </recommendedName>
    <alternativeName>
        <fullName evidence="1">GTP cyclohydrolase I</fullName>
        <shortName evidence="1">GTP-CH-I</shortName>
    </alternativeName>
</protein>
<comment type="catalytic activity">
    <reaction evidence="1">
        <text>GTP + H2O = 7,8-dihydroneopterin 3'-triphosphate + formate + H(+)</text>
        <dbReference type="Rhea" id="RHEA:17473"/>
        <dbReference type="ChEBI" id="CHEBI:15377"/>
        <dbReference type="ChEBI" id="CHEBI:15378"/>
        <dbReference type="ChEBI" id="CHEBI:15740"/>
        <dbReference type="ChEBI" id="CHEBI:37565"/>
        <dbReference type="ChEBI" id="CHEBI:58462"/>
        <dbReference type="EC" id="3.5.4.16"/>
    </reaction>
</comment>
<comment type="pathway">
    <text evidence="1">Cofactor biosynthesis; 7,8-dihydroneopterin triphosphate biosynthesis; 7,8-dihydroneopterin triphosphate from GTP: step 1/1.</text>
</comment>
<comment type="subunit">
    <text evidence="1">Homomer.</text>
</comment>
<comment type="similarity">
    <text evidence="1">Belongs to the GTP cyclohydrolase I family.</text>
</comment>
<name>GCH1_DEHMB</name>
<accession>A5FQD3</accession>